<gene>
    <name evidence="1" type="primary">rpsP</name>
    <name type="ordered locus">CMS0755</name>
</gene>
<name>RS16_CLASE</name>
<comment type="similarity">
    <text evidence="1">Belongs to the bacterial ribosomal protein bS16 family.</text>
</comment>
<protein>
    <recommendedName>
        <fullName evidence="1">Small ribosomal subunit protein bS16</fullName>
    </recommendedName>
    <alternativeName>
        <fullName evidence="3">30S ribosomal protein S16</fullName>
    </alternativeName>
</protein>
<sequence>MAVKIRLKRLGKIRAPYYRIVVADSRAKRDGRVIEEIGKYHPTEEPSFIEVQSERAQYWLSVGAQPTEQVEALLKLTGDWGRFKGDKDAVSTVRTREAKPAYVADEKKKPVLKPKTEKAAPEAAAPEAEATEEQA</sequence>
<keyword id="KW-0687">Ribonucleoprotein</keyword>
<keyword id="KW-0689">Ribosomal protein</keyword>
<organism>
    <name type="scientific">Clavibacter sepedonicus</name>
    <name type="common">Clavibacter michiganensis subsp. sepedonicus</name>
    <dbReference type="NCBI Taxonomy" id="31964"/>
    <lineage>
        <taxon>Bacteria</taxon>
        <taxon>Bacillati</taxon>
        <taxon>Actinomycetota</taxon>
        <taxon>Actinomycetes</taxon>
        <taxon>Micrococcales</taxon>
        <taxon>Microbacteriaceae</taxon>
        <taxon>Clavibacter</taxon>
    </lineage>
</organism>
<dbReference type="EMBL" id="AM849034">
    <property type="protein sequence ID" value="CAQ00875.1"/>
    <property type="molecule type" value="Genomic_DNA"/>
</dbReference>
<dbReference type="RefSeq" id="WP_012298184.1">
    <property type="nucleotide sequence ID" value="NZ_MZMN01000003.1"/>
</dbReference>
<dbReference type="SMR" id="B0REM8"/>
<dbReference type="STRING" id="31964.CMS0755"/>
<dbReference type="KEGG" id="cms:CMS0755"/>
<dbReference type="eggNOG" id="COG0228">
    <property type="taxonomic scope" value="Bacteria"/>
</dbReference>
<dbReference type="HOGENOM" id="CLU_100590_1_0_11"/>
<dbReference type="OrthoDB" id="9807878at2"/>
<dbReference type="Proteomes" id="UP000001318">
    <property type="component" value="Chromosome"/>
</dbReference>
<dbReference type="GO" id="GO:0005737">
    <property type="term" value="C:cytoplasm"/>
    <property type="evidence" value="ECO:0007669"/>
    <property type="project" value="UniProtKB-ARBA"/>
</dbReference>
<dbReference type="GO" id="GO:0015935">
    <property type="term" value="C:small ribosomal subunit"/>
    <property type="evidence" value="ECO:0007669"/>
    <property type="project" value="TreeGrafter"/>
</dbReference>
<dbReference type="GO" id="GO:0003735">
    <property type="term" value="F:structural constituent of ribosome"/>
    <property type="evidence" value="ECO:0007669"/>
    <property type="project" value="InterPro"/>
</dbReference>
<dbReference type="GO" id="GO:0006412">
    <property type="term" value="P:translation"/>
    <property type="evidence" value="ECO:0007669"/>
    <property type="project" value="UniProtKB-UniRule"/>
</dbReference>
<dbReference type="Gene3D" id="3.30.1320.10">
    <property type="match status" value="1"/>
</dbReference>
<dbReference type="HAMAP" id="MF_00385">
    <property type="entry name" value="Ribosomal_bS16"/>
    <property type="match status" value="1"/>
</dbReference>
<dbReference type="InterPro" id="IPR000307">
    <property type="entry name" value="Ribosomal_bS16"/>
</dbReference>
<dbReference type="InterPro" id="IPR020592">
    <property type="entry name" value="Ribosomal_bS16_CS"/>
</dbReference>
<dbReference type="InterPro" id="IPR023803">
    <property type="entry name" value="Ribosomal_bS16_dom_sf"/>
</dbReference>
<dbReference type="NCBIfam" id="NF011093">
    <property type="entry name" value="PRK14520.1"/>
    <property type="match status" value="1"/>
</dbReference>
<dbReference type="NCBIfam" id="TIGR00002">
    <property type="entry name" value="S16"/>
    <property type="match status" value="1"/>
</dbReference>
<dbReference type="PANTHER" id="PTHR12919">
    <property type="entry name" value="30S RIBOSOMAL PROTEIN S16"/>
    <property type="match status" value="1"/>
</dbReference>
<dbReference type="PANTHER" id="PTHR12919:SF20">
    <property type="entry name" value="SMALL RIBOSOMAL SUBUNIT PROTEIN BS16M"/>
    <property type="match status" value="1"/>
</dbReference>
<dbReference type="Pfam" id="PF00886">
    <property type="entry name" value="Ribosomal_S16"/>
    <property type="match status" value="1"/>
</dbReference>
<dbReference type="SUPFAM" id="SSF54565">
    <property type="entry name" value="Ribosomal protein S16"/>
    <property type="match status" value="1"/>
</dbReference>
<dbReference type="PROSITE" id="PS00732">
    <property type="entry name" value="RIBOSOMAL_S16"/>
    <property type="match status" value="1"/>
</dbReference>
<reference key="1">
    <citation type="journal article" date="2008" name="J. Bacteriol.">
        <title>Genome of the actinomycete plant pathogen Clavibacter michiganensis subsp. sepedonicus suggests recent niche adaptation.</title>
        <authorList>
            <person name="Bentley S.D."/>
            <person name="Corton C."/>
            <person name="Brown S.E."/>
            <person name="Barron A."/>
            <person name="Clark L."/>
            <person name="Doggett J."/>
            <person name="Harris B."/>
            <person name="Ormond D."/>
            <person name="Quail M.A."/>
            <person name="May G."/>
            <person name="Francis D."/>
            <person name="Knudson D."/>
            <person name="Parkhill J."/>
            <person name="Ishimaru C.A."/>
        </authorList>
    </citation>
    <scope>NUCLEOTIDE SEQUENCE [LARGE SCALE GENOMIC DNA]</scope>
    <source>
        <strain>ATCC 33113 / DSM 20744 / JCM 9667 / LMG 2889 / ICMP 2535 / C-1</strain>
    </source>
</reference>
<proteinExistence type="inferred from homology"/>
<accession>B0REM8</accession>
<feature type="chain" id="PRO_1000080141" description="Small ribosomal subunit protein bS16">
    <location>
        <begin position="1"/>
        <end position="135"/>
    </location>
</feature>
<feature type="region of interest" description="Disordered" evidence="2">
    <location>
        <begin position="105"/>
        <end position="135"/>
    </location>
</feature>
<feature type="compositionally biased region" description="Basic and acidic residues" evidence="2">
    <location>
        <begin position="105"/>
        <end position="120"/>
    </location>
</feature>
<evidence type="ECO:0000255" key="1">
    <source>
        <dbReference type="HAMAP-Rule" id="MF_00385"/>
    </source>
</evidence>
<evidence type="ECO:0000256" key="2">
    <source>
        <dbReference type="SAM" id="MobiDB-lite"/>
    </source>
</evidence>
<evidence type="ECO:0000305" key="3"/>